<accession>Q72CG3</accession>
<proteinExistence type="inferred from homology"/>
<reference key="1">
    <citation type="journal article" date="2004" name="Nat. Biotechnol.">
        <title>The genome sequence of the anaerobic, sulfate-reducing bacterium Desulfovibrio vulgaris Hildenborough.</title>
        <authorList>
            <person name="Heidelberg J.F."/>
            <person name="Seshadri R."/>
            <person name="Haveman S.A."/>
            <person name="Hemme C.L."/>
            <person name="Paulsen I.T."/>
            <person name="Kolonay J.F."/>
            <person name="Eisen J.A."/>
            <person name="Ward N.L."/>
            <person name="Methe B.A."/>
            <person name="Brinkac L.M."/>
            <person name="Daugherty S.C."/>
            <person name="DeBoy R.T."/>
            <person name="Dodson R.J."/>
            <person name="Durkin A.S."/>
            <person name="Madupu R."/>
            <person name="Nelson W.C."/>
            <person name="Sullivan S.A."/>
            <person name="Fouts D.E."/>
            <person name="Haft D.H."/>
            <person name="Selengut J."/>
            <person name="Peterson J.D."/>
            <person name="Davidsen T.M."/>
            <person name="Zafar N."/>
            <person name="Zhou L."/>
            <person name="Radune D."/>
            <person name="Dimitrov G."/>
            <person name="Hance M."/>
            <person name="Tran K."/>
            <person name="Khouri H.M."/>
            <person name="Gill J."/>
            <person name="Utterback T.R."/>
            <person name="Feldblyum T.V."/>
            <person name="Wall J.D."/>
            <person name="Voordouw G."/>
            <person name="Fraser C.M."/>
        </authorList>
    </citation>
    <scope>NUCLEOTIDE SEQUENCE [LARGE SCALE GENOMIC DNA]</scope>
    <source>
        <strain>ATCC 29579 / DSM 644 / CCUG 34227 / NCIMB 8303 / VKM B-1760 / Hildenborough</strain>
    </source>
</reference>
<feature type="chain" id="PRO_0000131510" description="Small ribosomal subunit protein uS5">
    <location>
        <begin position="1"/>
        <end position="163"/>
    </location>
</feature>
<feature type="domain" description="S5 DRBM" evidence="1">
    <location>
        <begin position="8"/>
        <end position="71"/>
    </location>
</feature>
<dbReference type="EMBL" id="AE017285">
    <property type="protein sequence ID" value="AAS95798.1"/>
    <property type="molecule type" value="Genomic_DNA"/>
</dbReference>
<dbReference type="RefSeq" id="WP_010938615.1">
    <property type="nucleotide sequence ID" value="NC_002937.3"/>
</dbReference>
<dbReference type="RefSeq" id="YP_010539.1">
    <property type="nucleotide sequence ID" value="NC_002937.3"/>
</dbReference>
<dbReference type="SMR" id="Q72CG3"/>
<dbReference type="STRING" id="882.DVU_1320"/>
<dbReference type="PaxDb" id="882-DVU_1320"/>
<dbReference type="EnsemblBacteria" id="AAS95798">
    <property type="protein sequence ID" value="AAS95798"/>
    <property type="gene ID" value="DVU_1320"/>
</dbReference>
<dbReference type="KEGG" id="dvu:DVU_1320"/>
<dbReference type="PATRIC" id="fig|882.5.peg.1232"/>
<dbReference type="eggNOG" id="COG0098">
    <property type="taxonomic scope" value="Bacteria"/>
</dbReference>
<dbReference type="HOGENOM" id="CLU_065898_2_2_7"/>
<dbReference type="OrthoDB" id="9809045at2"/>
<dbReference type="PhylomeDB" id="Q72CG3"/>
<dbReference type="Proteomes" id="UP000002194">
    <property type="component" value="Chromosome"/>
</dbReference>
<dbReference type="GO" id="GO:0015935">
    <property type="term" value="C:small ribosomal subunit"/>
    <property type="evidence" value="ECO:0007669"/>
    <property type="project" value="InterPro"/>
</dbReference>
<dbReference type="GO" id="GO:0019843">
    <property type="term" value="F:rRNA binding"/>
    <property type="evidence" value="ECO:0007669"/>
    <property type="project" value="UniProtKB-UniRule"/>
</dbReference>
<dbReference type="GO" id="GO:0003735">
    <property type="term" value="F:structural constituent of ribosome"/>
    <property type="evidence" value="ECO:0007669"/>
    <property type="project" value="InterPro"/>
</dbReference>
<dbReference type="GO" id="GO:0006412">
    <property type="term" value="P:translation"/>
    <property type="evidence" value="ECO:0007669"/>
    <property type="project" value="UniProtKB-UniRule"/>
</dbReference>
<dbReference type="FunFam" id="3.30.160.20:FF:000001">
    <property type="entry name" value="30S ribosomal protein S5"/>
    <property type="match status" value="1"/>
</dbReference>
<dbReference type="FunFam" id="3.30.230.10:FF:000002">
    <property type="entry name" value="30S ribosomal protein S5"/>
    <property type="match status" value="1"/>
</dbReference>
<dbReference type="Gene3D" id="3.30.160.20">
    <property type="match status" value="1"/>
</dbReference>
<dbReference type="Gene3D" id="3.30.230.10">
    <property type="match status" value="1"/>
</dbReference>
<dbReference type="HAMAP" id="MF_01307_B">
    <property type="entry name" value="Ribosomal_uS5_B"/>
    <property type="match status" value="1"/>
</dbReference>
<dbReference type="InterPro" id="IPR020568">
    <property type="entry name" value="Ribosomal_Su5_D2-typ_SF"/>
</dbReference>
<dbReference type="InterPro" id="IPR000851">
    <property type="entry name" value="Ribosomal_uS5"/>
</dbReference>
<dbReference type="InterPro" id="IPR005712">
    <property type="entry name" value="Ribosomal_uS5_bac-type"/>
</dbReference>
<dbReference type="InterPro" id="IPR005324">
    <property type="entry name" value="Ribosomal_uS5_C"/>
</dbReference>
<dbReference type="InterPro" id="IPR013810">
    <property type="entry name" value="Ribosomal_uS5_N"/>
</dbReference>
<dbReference type="InterPro" id="IPR018192">
    <property type="entry name" value="Ribosomal_uS5_N_CS"/>
</dbReference>
<dbReference type="InterPro" id="IPR014721">
    <property type="entry name" value="Ribsml_uS5_D2-typ_fold_subgr"/>
</dbReference>
<dbReference type="NCBIfam" id="TIGR01021">
    <property type="entry name" value="rpsE_bact"/>
    <property type="match status" value="1"/>
</dbReference>
<dbReference type="PANTHER" id="PTHR48277">
    <property type="entry name" value="MITOCHONDRIAL RIBOSOMAL PROTEIN S5"/>
    <property type="match status" value="1"/>
</dbReference>
<dbReference type="PANTHER" id="PTHR48277:SF1">
    <property type="entry name" value="MITOCHONDRIAL RIBOSOMAL PROTEIN S5"/>
    <property type="match status" value="1"/>
</dbReference>
<dbReference type="Pfam" id="PF00333">
    <property type="entry name" value="Ribosomal_S5"/>
    <property type="match status" value="1"/>
</dbReference>
<dbReference type="Pfam" id="PF03719">
    <property type="entry name" value="Ribosomal_S5_C"/>
    <property type="match status" value="1"/>
</dbReference>
<dbReference type="SUPFAM" id="SSF54768">
    <property type="entry name" value="dsRNA-binding domain-like"/>
    <property type="match status" value="1"/>
</dbReference>
<dbReference type="SUPFAM" id="SSF54211">
    <property type="entry name" value="Ribosomal protein S5 domain 2-like"/>
    <property type="match status" value="1"/>
</dbReference>
<dbReference type="PROSITE" id="PS00585">
    <property type="entry name" value="RIBOSOMAL_S5"/>
    <property type="match status" value="1"/>
</dbReference>
<dbReference type="PROSITE" id="PS50881">
    <property type="entry name" value="S5_DSRBD"/>
    <property type="match status" value="1"/>
</dbReference>
<keyword id="KW-1185">Reference proteome</keyword>
<keyword id="KW-0687">Ribonucleoprotein</keyword>
<keyword id="KW-0689">Ribosomal protein</keyword>
<keyword id="KW-0694">RNA-binding</keyword>
<keyword id="KW-0699">rRNA-binding</keyword>
<name>RS5_NITV2</name>
<evidence type="ECO:0000255" key="1">
    <source>
        <dbReference type="HAMAP-Rule" id="MF_01307"/>
    </source>
</evidence>
<evidence type="ECO:0000305" key="2"/>
<sequence length="163" mass="17144">MEQNEFGLIEKIVYLNRVAKVVKGGRRFSFSALVVVGDGKGSVGFGLGKAQEVPEALRKATERAKKSMIEVPLIDGTLPYEILGRFGAGHVLLKPASKGTGIIAGGAVRAVMEAVGVTDVLTKAIGTNNPHNVLRATVAGLASLRSAEEVGQLRGKKLEAPRK</sequence>
<protein>
    <recommendedName>
        <fullName evidence="1">Small ribosomal subunit protein uS5</fullName>
    </recommendedName>
    <alternativeName>
        <fullName evidence="2">30S ribosomal protein S5</fullName>
    </alternativeName>
</protein>
<gene>
    <name evidence="1" type="primary">rpsE</name>
    <name type="ordered locus">DVU_1320</name>
</gene>
<comment type="function">
    <text evidence="1">With S4 and S12 plays an important role in translational accuracy.</text>
</comment>
<comment type="function">
    <text evidence="1">Located at the back of the 30S subunit body where it stabilizes the conformation of the head with respect to the body.</text>
</comment>
<comment type="subunit">
    <text evidence="1">Part of the 30S ribosomal subunit. Contacts proteins S4 and S8.</text>
</comment>
<comment type="domain">
    <text>The N-terminal domain interacts with the head of the 30S subunit; the C-terminal domain interacts with the body and contacts protein S4. The interaction surface between S4 and S5 is involved in control of translational fidelity.</text>
</comment>
<comment type="similarity">
    <text evidence="1">Belongs to the universal ribosomal protein uS5 family.</text>
</comment>
<organism>
    <name type="scientific">Nitratidesulfovibrio vulgaris (strain ATCC 29579 / DSM 644 / CCUG 34227 / NCIMB 8303 / VKM B-1760 / Hildenborough)</name>
    <name type="common">Desulfovibrio vulgaris</name>
    <dbReference type="NCBI Taxonomy" id="882"/>
    <lineage>
        <taxon>Bacteria</taxon>
        <taxon>Pseudomonadati</taxon>
        <taxon>Thermodesulfobacteriota</taxon>
        <taxon>Desulfovibrionia</taxon>
        <taxon>Desulfovibrionales</taxon>
        <taxon>Desulfovibrionaceae</taxon>
        <taxon>Nitratidesulfovibrio</taxon>
    </lineage>
</organism>